<sequence length="190" mass="21386">MPRANEIKKGMVLNYNGKLLIVKDIDIQSPTARGAATLYKMRFSDVRTGLKVEERFKGDDIVDTVTLSRRGVDFSYVDGNEYVFMDKEDYTPYTFTKDQIEEELLFMPEGGMPDMQVLTWDGQLLALELPQTVDLEIVETAPGIKGASASARNKPATLSTGLVIQVPEYLSAGEKIRIHIEERRYMGRAD</sequence>
<name>EFPL_SALSV</name>
<dbReference type="EMBL" id="CP001127">
    <property type="protein sequence ID" value="ACF89330.1"/>
    <property type="molecule type" value="Genomic_DNA"/>
</dbReference>
<dbReference type="RefSeq" id="WP_001136822.1">
    <property type="nucleotide sequence ID" value="NC_011094.1"/>
</dbReference>
<dbReference type="SMR" id="B4TPB4"/>
<dbReference type="GeneID" id="66756682"/>
<dbReference type="KEGG" id="sew:SeSA_A2451"/>
<dbReference type="HOGENOM" id="CLU_074944_2_0_6"/>
<dbReference type="Proteomes" id="UP000001865">
    <property type="component" value="Chromosome"/>
</dbReference>
<dbReference type="GO" id="GO:0005829">
    <property type="term" value="C:cytosol"/>
    <property type="evidence" value="ECO:0007669"/>
    <property type="project" value="UniProtKB-ARBA"/>
</dbReference>
<dbReference type="GO" id="GO:0003746">
    <property type="term" value="F:translation elongation factor activity"/>
    <property type="evidence" value="ECO:0007669"/>
    <property type="project" value="UniProtKB-UniRule"/>
</dbReference>
<dbReference type="GO" id="GO:0043043">
    <property type="term" value="P:peptide biosynthetic process"/>
    <property type="evidence" value="ECO:0007669"/>
    <property type="project" value="InterPro"/>
</dbReference>
<dbReference type="CDD" id="cd04470">
    <property type="entry name" value="S1_EF-P_repeat_1"/>
    <property type="match status" value="1"/>
</dbReference>
<dbReference type="CDD" id="cd05794">
    <property type="entry name" value="S1_EF-P_repeat_2"/>
    <property type="match status" value="1"/>
</dbReference>
<dbReference type="FunFam" id="2.40.50.140:FF:000004">
    <property type="entry name" value="Elongation factor P"/>
    <property type="match status" value="1"/>
</dbReference>
<dbReference type="FunFam" id="2.30.30.30:FF:000011">
    <property type="entry name" value="Elongation factor P-like protein"/>
    <property type="match status" value="1"/>
</dbReference>
<dbReference type="FunFam" id="2.40.50.140:FF:000053">
    <property type="entry name" value="Elongation factor P-like protein"/>
    <property type="match status" value="1"/>
</dbReference>
<dbReference type="Gene3D" id="2.30.30.30">
    <property type="match status" value="1"/>
</dbReference>
<dbReference type="Gene3D" id="2.40.50.140">
    <property type="entry name" value="Nucleic acid-binding proteins"/>
    <property type="match status" value="2"/>
</dbReference>
<dbReference type="HAMAP" id="MF_00646">
    <property type="entry name" value="EFP"/>
    <property type="match status" value="1"/>
</dbReference>
<dbReference type="InterPro" id="IPR015365">
    <property type="entry name" value="Elong-fact-P_C"/>
</dbReference>
<dbReference type="InterPro" id="IPR012340">
    <property type="entry name" value="NA-bd_OB-fold"/>
</dbReference>
<dbReference type="InterPro" id="IPR014722">
    <property type="entry name" value="Rib_uL2_dom2"/>
</dbReference>
<dbReference type="InterPro" id="IPR020599">
    <property type="entry name" value="Transl_elong_fac_P/YeiP"/>
</dbReference>
<dbReference type="InterPro" id="IPR013185">
    <property type="entry name" value="Transl_elong_KOW-like"/>
</dbReference>
<dbReference type="InterPro" id="IPR011897">
    <property type="entry name" value="Transl_elong_p-like_YeiP"/>
</dbReference>
<dbReference type="InterPro" id="IPR001059">
    <property type="entry name" value="Transl_elong_P/YeiP_cen"/>
</dbReference>
<dbReference type="InterPro" id="IPR013852">
    <property type="entry name" value="Transl_elong_P/YeiP_CS"/>
</dbReference>
<dbReference type="InterPro" id="IPR008991">
    <property type="entry name" value="Translation_prot_SH3-like_sf"/>
</dbReference>
<dbReference type="NCBIfam" id="NF001810">
    <property type="entry name" value="PRK00529.1"/>
    <property type="match status" value="1"/>
</dbReference>
<dbReference type="NCBIfam" id="NF003392">
    <property type="entry name" value="PRK04542.1"/>
    <property type="match status" value="1"/>
</dbReference>
<dbReference type="NCBIfam" id="TIGR02178">
    <property type="entry name" value="yeiP"/>
    <property type="match status" value="1"/>
</dbReference>
<dbReference type="PANTHER" id="PTHR30053">
    <property type="entry name" value="ELONGATION FACTOR P"/>
    <property type="match status" value="1"/>
</dbReference>
<dbReference type="PANTHER" id="PTHR30053:SF14">
    <property type="entry name" value="TRANSLATION ELONGATION FACTOR KOW-LIKE DOMAIN-CONTAINING PROTEIN"/>
    <property type="match status" value="1"/>
</dbReference>
<dbReference type="Pfam" id="PF01132">
    <property type="entry name" value="EFP"/>
    <property type="match status" value="1"/>
</dbReference>
<dbReference type="Pfam" id="PF08207">
    <property type="entry name" value="EFP_N"/>
    <property type="match status" value="1"/>
</dbReference>
<dbReference type="Pfam" id="PF09285">
    <property type="entry name" value="Elong-fact-P_C"/>
    <property type="match status" value="1"/>
</dbReference>
<dbReference type="PIRSF" id="PIRSF005901">
    <property type="entry name" value="EF-P"/>
    <property type="match status" value="1"/>
</dbReference>
<dbReference type="SMART" id="SM01185">
    <property type="entry name" value="EFP"/>
    <property type="match status" value="1"/>
</dbReference>
<dbReference type="SMART" id="SM00841">
    <property type="entry name" value="Elong-fact-P_C"/>
    <property type="match status" value="1"/>
</dbReference>
<dbReference type="SUPFAM" id="SSF50249">
    <property type="entry name" value="Nucleic acid-binding proteins"/>
    <property type="match status" value="2"/>
</dbReference>
<dbReference type="SUPFAM" id="SSF50104">
    <property type="entry name" value="Translation proteins SH3-like domain"/>
    <property type="match status" value="1"/>
</dbReference>
<dbReference type="PROSITE" id="PS01275">
    <property type="entry name" value="EFP"/>
    <property type="match status" value="1"/>
</dbReference>
<accession>B4TPB4</accession>
<proteinExistence type="inferred from homology"/>
<comment type="similarity">
    <text evidence="1">Belongs to the elongation factor P family.</text>
</comment>
<feature type="chain" id="PRO_1000130926" description="Elongation factor P-like protein">
    <location>
        <begin position="1"/>
        <end position="190"/>
    </location>
</feature>
<protein>
    <recommendedName>
        <fullName evidence="1">Elongation factor P-like protein</fullName>
    </recommendedName>
</protein>
<reference key="1">
    <citation type="journal article" date="2011" name="J. Bacteriol.">
        <title>Comparative genomics of 28 Salmonella enterica isolates: evidence for CRISPR-mediated adaptive sublineage evolution.</title>
        <authorList>
            <person name="Fricke W.F."/>
            <person name="Mammel M.K."/>
            <person name="McDermott P.F."/>
            <person name="Tartera C."/>
            <person name="White D.G."/>
            <person name="Leclerc J.E."/>
            <person name="Ravel J."/>
            <person name="Cebula T.A."/>
        </authorList>
    </citation>
    <scope>NUCLEOTIDE SEQUENCE [LARGE SCALE GENOMIC DNA]</scope>
    <source>
        <strain>CVM19633</strain>
    </source>
</reference>
<gene>
    <name evidence="1" type="primary">yeiP</name>
    <name type="ordered locus">SeSA_A2451</name>
</gene>
<evidence type="ECO:0000255" key="1">
    <source>
        <dbReference type="HAMAP-Rule" id="MF_00646"/>
    </source>
</evidence>
<organism>
    <name type="scientific">Salmonella schwarzengrund (strain CVM19633)</name>
    <dbReference type="NCBI Taxonomy" id="439843"/>
    <lineage>
        <taxon>Bacteria</taxon>
        <taxon>Pseudomonadati</taxon>
        <taxon>Pseudomonadota</taxon>
        <taxon>Gammaproteobacteria</taxon>
        <taxon>Enterobacterales</taxon>
        <taxon>Enterobacteriaceae</taxon>
        <taxon>Salmonella</taxon>
    </lineage>
</organism>